<proteinExistence type="inferred from homology"/>
<keyword id="KW-0071">Autoinducer synthesis</keyword>
<keyword id="KW-0408">Iron</keyword>
<keyword id="KW-0456">Lyase</keyword>
<keyword id="KW-0479">Metal-binding</keyword>
<keyword id="KW-0673">Quorum sensing</keyword>
<feature type="chain" id="PRO_1000093322" description="S-ribosylhomocysteine lyase">
    <location>
        <begin position="1"/>
        <end position="171"/>
    </location>
</feature>
<feature type="binding site" evidence="1">
    <location>
        <position position="54"/>
    </location>
    <ligand>
        <name>Fe cation</name>
        <dbReference type="ChEBI" id="CHEBI:24875"/>
    </ligand>
</feature>
<feature type="binding site" evidence="1">
    <location>
        <position position="58"/>
    </location>
    <ligand>
        <name>Fe cation</name>
        <dbReference type="ChEBI" id="CHEBI:24875"/>
    </ligand>
</feature>
<feature type="binding site" evidence="1">
    <location>
        <position position="128"/>
    </location>
    <ligand>
        <name>Fe cation</name>
        <dbReference type="ChEBI" id="CHEBI:24875"/>
    </ligand>
</feature>
<protein>
    <recommendedName>
        <fullName evidence="1">S-ribosylhomocysteine lyase</fullName>
        <ecNumber evidence="1">4.4.1.21</ecNumber>
    </recommendedName>
    <alternativeName>
        <fullName evidence="1">AI-2 synthesis protein</fullName>
    </alternativeName>
    <alternativeName>
        <fullName evidence="1">Autoinducer-2 production protein LuxS</fullName>
    </alternativeName>
</protein>
<name>LUXS_SALEP</name>
<reference key="1">
    <citation type="journal article" date="2008" name="Genome Res.">
        <title>Comparative genome analysis of Salmonella enteritidis PT4 and Salmonella gallinarum 287/91 provides insights into evolutionary and host adaptation pathways.</title>
        <authorList>
            <person name="Thomson N.R."/>
            <person name="Clayton D.J."/>
            <person name="Windhorst D."/>
            <person name="Vernikos G."/>
            <person name="Davidson S."/>
            <person name="Churcher C."/>
            <person name="Quail M.A."/>
            <person name="Stevens M."/>
            <person name="Jones M.A."/>
            <person name="Watson M."/>
            <person name="Barron A."/>
            <person name="Layton A."/>
            <person name="Pickard D."/>
            <person name="Kingsley R.A."/>
            <person name="Bignell A."/>
            <person name="Clark L."/>
            <person name="Harris B."/>
            <person name="Ormond D."/>
            <person name="Abdellah Z."/>
            <person name="Brooks K."/>
            <person name="Cherevach I."/>
            <person name="Chillingworth T."/>
            <person name="Woodward J."/>
            <person name="Norberczak H."/>
            <person name="Lord A."/>
            <person name="Arrowsmith C."/>
            <person name="Jagels K."/>
            <person name="Moule S."/>
            <person name="Mungall K."/>
            <person name="Saunders M."/>
            <person name="Whitehead S."/>
            <person name="Chabalgoity J.A."/>
            <person name="Maskell D."/>
            <person name="Humphreys T."/>
            <person name="Roberts M."/>
            <person name="Barrow P.A."/>
            <person name="Dougan G."/>
            <person name="Parkhill J."/>
        </authorList>
    </citation>
    <scope>NUCLEOTIDE SEQUENCE [LARGE SCALE GENOMIC DNA]</scope>
    <source>
        <strain>P125109</strain>
    </source>
</reference>
<evidence type="ECO:0000255" key="1">
    <source>
        <dbReference type="HAMAP-Rule" id="MF_00091"/>
    </source>
</evidence>
<gene>
    <name evidence="1" type="primary">luxS</name>
    <name type="ordered locus">SEN2662</name>
</gene>
<comment type="function">
    <text evidence="1">Involved in the synthesis of autoinducer 2 (AI-2) which is secreted by bacteria and is used to communicate both the cell density and the metabolic potential of the environment. The regulation of gene expression in response to changes in cell density is called quorum sensing. Catalyzes the transformation of S-ribosylhomocysteine (RHC) to homocysteine (HC) and 4,5-dihydroxy-2,3-pentadione (DPD).</text>
</comment>
<comment type="catalytic activity">
    <reaction evidence="1">
        <text>S-(5-deoxy-D-ribos-5-yl)-L-homocysteine = (S)-4,5-dihydroxypentane-2,3-dione + L-homocysteine</text>
        <dbReference type="Rhea" id="RHEA:17753"/>
        <dbReference type="ChEBI" id="CHEBI:29484"/>
        <dbReference type="ChEBI" id="CHEBI:58195"/>
        <dbReference type="ChEBI" id="CHEBI:58199"/>
        <dbReference type="EC" id="4.4.1.21"/>
    </reaction>
</comment>
<comment type="cofactor">
    <cofactor evidence="1">
        <name>Fe cation</name>
        <dbReference type="ChEBI" id="CHEBI:24875"/>
    </cofactor>
    <text evidence="1">Binds 1 Fe cation per subunit.</text>
</comment>
<comment type="subunit">
    <text evidence="1">Homodimer.</text>
</comment>
<comment type="similarity">
    <text evidence="1">Belongs to the LuxS family.</text>
</comment>
<organism>
    <name type="scientific">Salmonella enteritidis PT4 (strain P125109)</name>
    <dbReference type="NCBI Taxonomy" id="550537"/>
    <lineage>
        <taxon>Bacteria</taxon>
        <taxon>Pseudomonadati</taxon>
        <taxon>Pseudomonadota</taxon>
        <taxon>Gammaproteobacteria</taxon>
        <taxon>Enterobacterales</taxon>
        <taxon>Enterobacteriaceae</taxon>
        <taxon>Salmonella</taxon>
    </lineage>
</organism>
<accession>B5QV71</accession>
<dbReference type="EC" id="4.4.1.21" evidence="1"/>
<dbReference type="EMBL" id="AM933172">
    <property type="protein sequence ID" value="CAR34242.1"/>
    <property type="molecule type" value="Genomic_DNA"/>
</dbReference>
<dbReference type="RefSeq" id="WP_001130194.1">
    <property type="nucleotide sequence ID" value="NC_011294.1"/>
</dbReference>
<dbReference type="SMR" id="B5QV71"/>
<dbReference type="KEGG" id="set:SEN2662"/>
<dbReference type="HOGENOM" id="CLU_107531_2_0_6"/>
<dbReference type="Proteomes" id="UP000000613">
    <property type="component" value="Chromosome"/>
</dbReference>
<dbReference type="GO" id="GO:0005506">
    <property type="term" value="F:iron ion binding"/>
    <property type="evidence" value="ECO:0007669"/>
    <property type="project" value="InterPro"/>
</dbReference>
<dbReference type="GO" id="GO:0043768">
    <property type="term" value="F:S-ribosylhomocysteine lyase activity"/>
    <property type="evidence" value="ECO:0007669"/>
    <property type="project" value="UniProtKB-UniRule"/>
</dbReference>
<dbReference type="GO" id="GO:0009372">
    <property type="term" value="P:quorum sensing"/>
    <property type="evidence" value="ECO:0007669"/>
    <property type="project" value="UniProtKB-UniRule"/>
</dbReference>
<dbReference type="FunFam" id="3.30.1360.80:FF:000001">
    <property type="entry name" value="S-ribosylhomocysteine lyase"/>
    <property type="match status" value="1"/>
</dbReference>
<dbReference type="Gene3D" id="3.30.1360.80">
    <property type="entry name" value="S-ribosylhomocysteinase (LuxS)"/>
    <property type="match status" value="1"/>
</dbReference>
<dbReference type="HAMAP" id="MF_00091">
    <property type="entry name" value="LuxS"/>
    <property type="match status" value="1"/>
</dbReference>
<dbReference type="InterPro" id="IPR037005">
    <property type="entry name" value="LuxS_sf"/>
</dbReference>
<dbReference type="InterPro" id="IPR011249">
    <property type="entry name" value="Metalloenz_LuxS/M16"/>
</dbReference>
<dbReference type="InterPro" id="IPR003815">
    <property type="entry name" value="S-ribosylhomocysteinase"/>
</dbReference>
<dbReference type="NCBIfam" id="NF002602">
    <property type="entry name" value="PRK02260.1-2"/>
    <property type="match status" value="1"/>
</dbReference>
<dbReference type="PANTHER" id="PTHR35799">
    <property type="entry name" value="S-RIBOSYLHOMOCYSTEINE LYASE"/>
    <property type="match status" value="1"/>
</dbReference>
<dbReference type="PANTHER" id="PTHR35799:SF1">
    <property type="entry name" value="S-RIBOSYLHOMOCYSTEINE LYASE"/>
    <property type="match status" value="1"/>
</dbReference>
<dbReference type="Pfam" id="PF02664">
    <property type="entry name" value="LuxS"/>
    <property type="match status" value="1"/>
</dbReference>
<dbReference type="PIRSF" id="PIRSF006160">
    <property type="entry name" value="AI2"/>
    <property type="match status" value="1"/>
</dbReference>
<dbReference type="PRINTS" id="PR01487">
    <property type="entry name" value="LUXSPROTEIN"/>
</dbReference>
<dbReference type="SUPFAM" id="SSF63411">
    <property type="entry name" value="LuxS/MPP-like metallohydrolase"/>
    <property type="match status" value="1"/>
</dbReference>
<sequence>MPLLDSFAVDHTRMQAPAVRVAKTMNTPHGDAITVFDLRFCIPNKEVMPEKGIHTLEHLFAGFMRDHLNGNGVEIIDISPMGCRTGFYMSLIGTPDEQRVADAWKAAMADVLKVQDQNQIPELNVYQCGTYQMHSLSEAQDIARHILERDVRVNSNKELALPKEKLQELHI</sequence>